<organism>
    <name type="scientific">Micrococcus luteus (strain ATCC 4698 / DSM 20030 / JCM 1464 / CCM 169 / CCUG 5858 / IAM 1056 / NBRC 3333 / NCIMB 9278 / NCTC 2665 / VKM Ac-2230)</name>
    <name type="common">Micrococcus lysodeikticus</name>
    <dbReference type="NCBI Taxonomy" id="465515"/>
    <lineage>
        <taxon>Bacteria</taxon>
        <taxon>Bacillati</taxon>
        <taxon>Actinomycetota</taxon>
        <taxon>Actinomycetes</taxon>
        <taxon>Micrococcales</taxon>
        <taxon>Micrococcaceae</taxon>
        <taxon>Micrococcus</taxon>
    </lineage>
</organism>
<keyword id="KW-1003">Cell membrane</keyword>
<keyword id="KW-0472">Membrane</keyword>
<keyword id="KW-1185">Reference proteome</keyword>
<keyword id="KW-0812">Transmembrane</keyword>
<keyword id="KW-1133">Transmembrane helix</keyword>
<reference key="1">
    <citation type="journal article" date="2010" name="J. Bacteriol.">
        <title>Genome sequence of the Fleming strain of Micrococcus luteus, a simple free-living actinobacterium.</title>
        <authorList>
            <person name="Young M."/>
            <person name="Artsatbanov V."/>
            <person name="Beller H.R."/>
            <person name="Chandra G."/>
            <person name="Chater K.F."/>
            <person name="Dover L.G."/>
            <person name="Goh E.B."/>
            <person name="Kahan T."/>
            <person name="Kaprelyants A.S."/>
            <person name="Kyrpides N."/>
            <person name="Lapidus A."/>
            <person name="Lowry S.R."/>
            <person name="Lykidis A."/>
            <person name="Mahillon J."/>
            <person name="Markowitz V."/>
            <person name="Mavromatis K."/>
            <person name="Mukamolova G.V."/>
            <person name="Oren A."/>
            <person name="Rokem J.S."/>
            <person name="Smith M.C."/>
            <person name="Young D.I."/>
            <person name="Greenblatt C.L."/>
        </authorList>
    </citation>
    <scope>NUCLEOTIDE SEQUENCE [LARGE SCALE GENOMIC DNA]</scope>
    <source>
        <strain>ATCC 4698 / DSM 20030 / JCM 1464 / CCM 169 / CCUG 5858 / IAM 1056 / NBRC 3333 / NCIMB 9278 / NCTC 2665 / VKM Ac-2230</strain>
    </source>
</reference>
<accession>C5CB68</accession>
<gene>
    <name type="ordered locus">Mlut_14990</name>
</gene>
<protein>
    <recommendedName>
        <fullName evidence="1">UPF0182 protein Mlut_14990</fullName>
    </recommendedName>
</protein>
<evidence type="ECO:0000255" key="1">
    <source>
        <dbReference type="HAMAP-Rule" id="MF_01600"/>
    </source>
</evidence>
<evidence type="ECO:0000256" key="2">
    <source>
        <dbReference type="SAM" id="MobiDB-lite"/>
    </source>
</evidence>
<feature type="chain" id="PRO_1000215683" description="UPF0182 protein Mlut_14990">
    <location>
        <begin position="1"/>
        <end position="1047"/>
    </location>
</feature>
<feature type="transmembrane region" description="Helical" evidence="1">
    <location>
        <begin position="71"/>
        <end position="91"/>
    </location>
</feature>
<feature type="transmembrane region" description="Helical" evidence="1">
    <location>
        <begin position="114"/>
        <end position="134"/>
    </location>
</feature>
<feature type="transmembrane region" description="Helical" evidence="1">
    <location>
        <begin position="168"/>
        <end position="188"/>
    </location>
</feature>
<feature type="transmembrane region" description="Helical" evidence="1">
    <location>
        <begin position="214"/>
        <end position="234"/>
    </location>
</feature>
<feature type="transmembrane region" description="Helical" evidence="1">
    <location>
        <begin position="266"/>
        <end position="286"/>
    </location>
</feature>
<feature type="transmembrane region" description="Helical" evidence="1">
    <location>
        <begin position="314"/>
        <end position="334"/>
    </location>
</feature>
<feature type="transmembrane region" description="Helical" evidence="1">
    <location>
        <begin position="341"/>
        <end position="361"/>
    </location>
</feature>
<feature type="region of interest" description="Disordered" evidence="2">
    <location>
        <begin position="1"/>
        <end position="66"/>
    </location>
</feature>
<feature type="region of interest" description="Disordered" evidence="2">
    <location>
        <begin position="544"/>
        <end position="568"/>
    </location>
</feature>
<feature type="region of interest" description="Disordered" evidence="2">
    <location>
        <begin position="941"/>
        <end position="965"/>
    </location>
</feature>
<feature type="region of interest" description="Disordered" evidence="2">
    <location>
        <begin position="1007"/>
        <end position="1047"/>
    </location>
</feature>
<feature type="compositionally biased region" description="Gly residues" evidence="2">
    <location>
        <begin position="1"/>
        <end position="27"/>
    </location>
</feature>
<feature type="compositionally biased region" description="Gly residues" evidence="2">
    <location>
        <begin position="49"/>
        <end position="59"/>
    </location>
</feature>
<feature type="compositionally biased region" description="Polar residues" evidence="2">
    <location>
        <begin position="555"/>
        <end position="565"/>
    </location>
</feature>
<feature type="compositionally biased region" description="Low complexity" evidence="2">
    <location>
        <begin position="1015"/>
        <end position="1037"/>
    </location>
</feature>
<feature type="compositionally biased region" description="Pro residues" evidence="2">
    <location>
        <begin position="1038"/>
        <end position="1047"/>
    </location>
</feature>
<proteinExistence type="inferred from homology"/>
<name>Y1499_MICLC</name>
<sequence>MSFGQGGGGPFGGPPRDGGGTAGGQSGPFGAFGPFGGAPRGPGDDGDRGPGGPFGGGGSSAARGRGRPGRPSALVLTIIAVAVLVGLFVVFTNVYTDVLWFSQLGFTEVFWTEVLAKGALFLIAGLGMALAVWLAIRTAWRHRPADASAAARDSLSQVQRQLEPIRRLVFLGVPLVLGVFAGSTAMNGWNTVLLFLNQVPYGQADPEFGLDLMFFMATLPFLTLVVGYLISVVLVSGITGLLVHYLYGAVRVEEGGGVRITPAARAHIGITLAVFLLLQGVNFWLNRYRTTQSQTGNWAGALYTDVNAVIPTSAILAVTAVIVAGLFVWTVVSGRWRLSLIGTAVLVITALVVGTAYPFIVQEYQVKPSERTLESQYIERNIAMTREAYGLDDVEVTNYEGATDTEAGALAGEEANTANVRLMDPNLISQTFGQLQQFRPYYSFPTTLHVDRYEVDGQTRDTILAARDVNVDDSQSWVNRHTIYTHGYGMVVADASEVAAGGRPQWLLSEIPTRGPLASDQDYEPRIYFGHNSPSYSVVGAPEGAPAVERDRPQTADSQEDTAYTFSGDGGPSVGNLFNRLAYAVKFGSPELVLSSDVNEASQILYDRDPAERVRKVAPYLTVDTAPYPAIVDGRVQWIVDAYTTSDQFPYSTAQQLGEVTVDSLSQGQNPALQGRVNYIRNSVKATVDAYDGSVSLYAWDDQDPLLQAWQNVYPSSLRPYSEMSAGLLDHVRYPEDMFKVQRELLGRYHVTDADDFYENNDAWSVPSDPTREEDVKQPPYYMTLQMPGQDEPAFSLTSSYIPQITDGAQQRNVLYGFLSAAGDAGTGEDGVKAEGYGQLRLLELPRSTTVPGPGQAQANFDSNADVSRELNLLRQGASEVLNGNMITLPVAGGILYVQPVYVRSSGGTTYPTLRKVLVSFGDKVGFADTLQEALDQVFDGDSGAVTPEEKQAEAPAPGEKPTAPGTVEEELSAALEEAQDALTQGQERLAEGDWAGYGEQQKRLNEALKRATAADDALGGDAPAQEQAPAEASPAPSSSPSPTPSG</sequence>
<comment type="subcellular location">
    <subcellularLocation>
        <location evidence="1">Cell membrane</location>
        <topology evidence="1">Multi-pass membrane protein</topology>
    </subcellularLocation>
</comment>
<comment type="similarity">
    <text evidence="1">Belongs to the UPF0182 family.</text>
</comment>
<dbReference type="EMBL" id="CP001628">
    <property type="protein sequence ID" value="ACS30991.1"/>
    <property type="molecule type" value="Genomic_DNA"/>
</dbReference>
<dbReference type="RefSeq" id="WP_012750995.1">
    <property type="nucleotide sequence ID" value="NC_012803.1"/>
</dbReference>
<dbReference type="SMR" id="C5CB68"/>
<dbReference type="STRING" id="465515.Mlut_14990"/>
<dbReference type="EnsemblBacteria" id="ACS30991">
    <property type="protein sequence ID" value="ACS30991"/>
    <property type="gene ID" value="Mlut_14990"/>
</dbReference>
<dbReference type="GeneID" id="93343372"/>
<dbReference type="KEGG" id="mlu:Mlut_14990"/>
<dbReference type="PATRIC" id="fig|465515.4.peg.1435"/>
<dbReference type="eggNOG" id="COG1615">
    <property type="taxonomic scope" value="Bacteria"/>
</dbReference>
<dbReference type="HOGENOM" id="CLU_007733_1_0_11"/>
<dbReference type="Proteomes" id="UP000000738">
    <property type="component" value="Chromosome"/>
</dbReference>
<dbReference type="GO" id="GO:0005576">
    <property type="term" value="C:extracellular region"/>
    <property type="evidence" value="ECO:0007669"/>
    <property type="project" value="TreeGrafter"/>
</dbReference>
<dbReference type="GO" id="GO:0005886">
    <property type="term" value="C:plasma membrane"/>
    <property type="evidence" value="ECO:0007669"/>
    <property type="project" value="UniProtKB-SubCell"/>
</dbReference>
<dbReference type="HAMAP" id="MF_01600">
    <property type="entry name" value="UPF0182"/>
    <property type="match status" value="1"/>
</dbReference>
<dbReference type="InterPro" id="IPR005372">
    <property type="entry name" value="UPF0182"/>
</dbReference>
<dbReference type="PANTHER" id="PTHR39344">
    <property type="entry name" value="UPF0182 PROTEIN SLL1060"/>
    <property type="match status" value="1"/>
</dbReference>
<dbReference type="PANTHER" id="PTHR39344:SF1">
    <property type="entry name" value="UPF0182 PROTEIN SLL1060"/>
    <property type="match status" value="1"/>
</dbReference>
<dbReference type="Pfam" id="PF03699">
    <property type="entry name" value="UPF0182"/>
    <property type="match status" value="1"/>
</dbReference>